<reference key="1">
    <citation type="journal article" date="2007" name="Nat. Biotechnol.">
        <title>Comparative analysis of the complete genome sequence of the plant growth-promoting bacterium Bacillus amyloliquefaciens FZB42.</title>
        <authorList>
            <person name="Chen X.H."/>
            <person name="Koumoutsi A."/>
            <person name="Scholz R."/>
            <person name="Eisenreich A."/>
            <person name="Schneider K."/>
            <person name="Heinemeyer I."/>
            <person name="Morgenstern B."/>
            <person name="Voss B."/>
            <person name="Hess W.R."/>
            <person name="Reva O."/>
            <person name="Junge H."/>
            <person name="Voigt B."/>
            <person name="Jungblut P.R."/>
            <person name="Vater J."/>
            <person name="Suessmuth R."/>
            <person name="Liesegang H."/>
            <person name="Strittmatter A."/>
            <person name="Gottschalk G."/>
            <person name="Borriss R."/>
        </authorList>
    </citation>
    <scope>NUCLEOTIDE SEQUENCE [LARGE SCALE GENOMIC DNA]</scope>
    <source>
        <strain>DSM 23117 / BGSC 10A6 / LMG 26770 / FZB42</strain>
    </source>
</reference>
<protein>
    <recommendedName>
        <fullName evidence="1">Probable GTP-binding protein EngB</fullName>
    </recommendedName>
</protein>
<comment type="function">
    <text evidence="1">Necessary for normal cell division and for the maintenance of normal septation.</text>
</comment>
<comment type="cofactor">
    <cofactor evidence="1">
        <name>Mg(2+)</name>
        <dbReference type="ChEBI" id="CHEBI:18420"/>
    </cofactor>
</comment>
<comment type="similarity">
    <text evidence="1">Belongs to the TRAFAC class TrmE-Era-EngA-EngB-Septin-like GTPase superfamily. EngB GTPase family.</text>
</comment>
<name>ENGB_BACVZ</name>
<gene>
    <name evidence="1" type="primary">engB</name>
    <name type="ordered locus">RBAM_025250</name>
</gene>
<organism>
    <name type="scientific">Bacillus velezensis (strain DSM 23117 / BGSC 10A6 / LMG 26770 / FZB42)</name>
    <name type="common">Bacillus amyloliquefaciens subsp. plantarum</name>
    <dbReference type="NCBI Taxonomy" id="326423"/>
    <lineage>
        <taxon>Bacteria</taxon>
        <taxon>Bacillati</taxon>
        <taxon>Bacillota</taxon>
        <taxon>Bacilli</taxon>
        <taxon>Bacillales</taxon>
        <taxon>Bacillaceae</taxon>
        <taxon>Bacillus</taxon>
        <taxon>Bacillus amyloliquefaciens group</taxon>
    </lineage>
</organism>
<evidence type="ECO:0000255" key="1">
    <source>
        <dbReference type="HAMAP-Rule" id="MF_00321"/>
    </source>
</evidence>
<keyword id="KW-0131">Cell cycle</keyword>
<keyword id="KW-0132">Cell division</keyword>
<keyword id="KW-0342">GTP-binding</keyword>
<keyword id="KW-0460">Magnesium</keyword>
<keyword id="KW-0479">Metal-binding</keyword>
<keyword id="KW-0547">Nucleotide-binding</keyword>
<keyword id="KW-0717">Septation</keyword>
<accession>A7Z7A9</accession>
<proteinExistence type="inferred from homology"/>
<sequence length="195" mass="21997">MKVTKSEIVISAVKPEQYPDGGLPEIALAGRSNVGKSSFINSLINRKNLARTSSKPGKTQTLNFYIINDELHFVDVPGYGFAKVSKSEREAWGRMIETYMTTREELKACVQIVDLRHAPSAEDVNMYEFLKYYGIPVIVIATKADKIPKGKWDKHLKVVKQTLDMDPEDELILFSSETKKGKDEAWGAIKKMISR</sequence>
<dbReference type="EMBL" id="CP000560">
    <property type="protein sequence ID" value="ABS74885.1"/>
    <property type="molecule type" value="Genomic_DNA"/>
</dbReference>
<dbReference type="SMR" id="A7Z7A9"/>
<dbReference type="GeneID" id="93081667"/>
<dbReference type="KEGG" id="bay:RBAM_025250"/>
<dbReference type="HOGENOM" id="CLU_033732_3_0_9"/>
<dbReference type="Proteomes" id="UP000001120">
    <property type="component" value="Chromosome"/>
</dbReference>
<dbReference type="GO" id="GO:0005829">
    <property type="term" value="C:cytosol"/>
    <property type="evidence" value="ECO:0007669"/>
    <property type="project" value="TreeGrafter"/>
</dbReference>
<dbReference type="GO" id="GO:0005525">
    <property type="term" value="F:GTP binding"/>
    <property type="evidence" value="ECO:0007669"/>
    <property type="project" value="UniProtKB-UniRule"/>
</dbReference>
<dbReference type="GO" id="GO:0046872">
    <property type="term" value="F:metal ion binding"/>
    <property type="evidence" value="ECO:0007669"/>
    <property type="project" value="UniProtKB-KW"/>
</dbReference>
<dbReference type="GO" id="GO:0000917">
    <property type="term" value="P:division septum assembly"/>
    <property type="evidence" value="ECO:0007669"/>
    <property type="project" value="UniProtKB-KW"/>
</dbReference>
<dbReference type="CDD" id="cd01876">
    <property type="entry name" value="YihA_EngB"/>
    <property type="match status" value="1"/>
</dbReference>
<dbReference type="FunFam" id="3.40.50.300:FF:000098">
    <property type="entry name" value="Probable GTP-binding protein EngB"/>
    <property type="match status" value="1"/>
</dbReference>
<dbReference type="Gene3D" id="3.40.50.300">
    <property type="entry name" value="P-loop containing nucleotide triphosphate hydrolases"/>
    <property type="match status" value="1"/>
</dbReference>
<dbReference type="HAMAP" id="MF_00321">
    <property type="entry name" value="GTPase_EngB"/>
    <property type="match status" value="1"/>
</dbReference>
<dbReference type="InterPro" id="IPR030393">
    <property type="entry name" value="G_ENGB_dom"/>
</dbReference>
<dbReference type="InterPro" id="IPR006073">
    <property type="entry name" value="GTP-bd"/>
</dbReference>
<dbReference type="InterPro" id="IPR019987">
    <property type="entry name" value="GTP-bd_ribosome_bio_YsxC"/>
</dbReference>
<dbReference type="InterPro" id="IPR027417">
    <property type="entry name" value="P-loop_NTPase"/>
</dbReference>
<dbReference type="NCBIfam" id="TIGR03598">
    <property type="entry name" value="GTPase_YsxC"/>
    <property type="match status" value="1"/>
</dbReference>
<dbReference type="PANTHER" id="PTHR11649:SF13">
    <property type="entry name" value="ENGB-TYPE G DOMAIN-CONTAINING PROTEIN"/>
    <property type="match status" value="1"/>
</dbReference>
<dbReference type="PANTHER" id="PTHR11649">
    <property type="entry name" value="MSS1/TRME-RELATED GTP-BINDING PROTEIN"/>
    <property type="match status" value="1"/>
</dbReference>
<dbReference type="Pfam" id="PF01926">
    <property type="entry name" value="MMR_HSR1"/>
    <property type="match status" value="1"/>
</dbReference>
<dbReference type="SUPFAM" id="SSF52540">
    <property type="entry name" value="P-loop containing nucleoside triphosphate hydrolases"/>
    <property type="match status" value="1"/>
</dbReference>
<dbReference type="PROSITE" id="PS51706">
    <property type="entry name" value="G_ENGB"/>
    <property type="match status" value="1"/>
</dbReference>
<feature type="chain" id="PRO_1000005798" description="Probable GTP-binding protein EngB">
    <location>
        <begin position="1"/>
        <end position="195"/>
    </location>
</feature>
<feature type="domain" description="EngB-type G" evidence="1">
    <location>
        <begin position="22"/>
        <end position="195"/>
    </location>
</feature>
<feature type="binding site" evidence="1">
    <location>
        <begin position="30"/>
        <end position="37"/>
    </location>
    <ligand>
        <name>GTP</name>
        <dbReference type="ChEBI" id="CHEBI:37565"/>
    </ligand>
</feature>
<feature type="binding site" evidence="1">
    <location>
        <position position="37"/>
    </location>
    <ligand>
        <name>Mg(2+)</name>
        <dbReference type="ChEBI" id="CHEBI:18420"/>
    </ligand>
</feature>
<feature type="binding site" evidence="1">
    <location>
        <begin position="57"/>
        <end position="61"/>
    </location>
    <ligand>
        <name>GTP</name>
        <dbReference type="ChEBI" id="CHEBI:37565"/>
    </ligand>
</feature>
<feature type="binding site" evidence="1">
    <location>
        <position position="59"/>
    </location>
    <ligand>
        <name>Mg(2+)</name>
        <dbReference type="ChEBI" id="CHEBI:18420"/>
    </ligand>
</feature>
<feature type="binding site" evidence="1">
    <location>
        <begin position="75"/>
        <end position="78"/>
    </location>
    <ligand>
        <name>GTP</name>
        <dbReference type="ChEBI" id="CHEBI:37565"/>
    </ligand>
</feature>
<feature type="binding site" evidence="1">
    <location>
        <begin position="142"/>
        <end position="145"/>
    </location>
    <ligand>
        <name>GTP</name>
        <dbReference type="ChEBI" id="CHEBI:37565"/>
    </ligand>
</feature>
<feature type="binding site" evidence="1">
    <location>
        <begin position="174"/>
        <end position="176"/>
    </location>
    <ligand>
        <name>GTP</name>
        <dbReference type="ChEBI" id="CHEBI:37565"/>
    </ligand>
</feature>